<comment type="function">
    <text evidence="24">Key element of the urea cycle converting L-arginine to urea and L-ornithine, which is further metabolized into metabolites proline and polyamides that drive collagen synthesis and bioenergetic pathways critical for cell proliferation, respectively; the urea cycle takes place primarily in the liver and, to a lesser extent, in the kidneys.</text>
</comment>
<comment type="function">
    <text evidence="3 6 9 13">Functions in L-arginine homeostasis in nonhepatic tissues characterized by the competition between nitric oxide synthase (NOS) and arginase for the available intracellular substrate arginine. Arginine metabolism is a critical regulator of innate and adaptive immune responses. Involved in an antimicrobial effector pathway in polymorphonuclear granulocytes (PMN). Upon PMN cell death is liberated from the phagolysosome and depletes arginine in the microenvironment leading to suppressed T cell and natural killer (NK) cell proliferation and cytokine secretion (PubMed:15546957, PubMed:16709924, PubMed:19380772). In group 2 innate lymphoid cells (ILC2s) promotes acute type 2 inflammation in the lung and is involved in optimal ILC2 proliferation but not survival (By similarity). In humans, the immunological role in the monocytic/macrophage/dendritic cell (DC) lineage is unsure.</text>
</comment>
<comment type="catalytic activity">
    <reaction evidence="8 11 14">
        <text>L-arginine + H2O = urea + L-ornithine</text>
        <dbReference type="Rhea" id="RHEA:20569"/>
        <dbReference type="ChEBI" id="CHEBI:15377"/>
        <dbReference type="ChEBI" id="CHEBI:16199"/>
        <dbReference type="ChEBI" id="CHEBI:32682"/>
        <dbReference type="ChEBI" id="CHEBI:46911"/>
        <dbReference type="EC" id="3.5.3.1"/>
    </reaction>
</comment>
<comment type="cofactor">
    <cofactor evidence="8 10 11 12">
        <name>Mn(2+)</name>
        <dbReference type="ChEBI" id="CHEBI:29035"/>
    </cofactor>
    <text evidence="8 10 11 12 14">Binds 2 manganese ions per subunit.</text>
</comment>
<comment type="pathway">
    <text evidence="25">Nitrogen metabolism; urea cycle; L-ornithine and urea from L-arginine: step 1/1.</text>
</comment>
<comment type="subunit">
    <text evidence="8 10 11 12 15 19">Homotrimer (PubMed:16141327, PubMed:17469833, PubMed:17562323, PubMed:18802628, PubMed:2241902). Interacts with CMTM6 (PubMed:28813417).</text>
</comment>
<comment type="subcellular location">
    <subcellularLocation>
        <location evidence="8">Cytoplasm</location>
    </subcellularLocation>
    <subcellularLocation>
        <location evidence="6">Cytoplasmic granule</location>
    </subcellularLocation>
    <text evidence="6">Localized in azurophil granules of neutrophils (PubMed:15546957).</text>
</comment>
<comment type="alternative products">
    <event type="alternative splicing"/>
    <isoform>
        <id>P05089-1</id>
        <name>1</name>
        <sequence type="displayed"/>
    </isoform>
    <isoform>
        <id>P05089-2</id>
        <name>2</name>
        <name>Erythroid variant</name>
        <sequence type="described" ref="VSP_009330"/>
    </isoform>
    <isoform>
        <id>P05089-3</id>
        <name>3</name>
        <sequence type="described" ref="VSP_009331"/>
    </isoform>
</comment>
<comment type="tissue specificity">
    <text evidence="6 17">Within the immune system initially reported to be selectively expressed in granulocytes (polymorphonuclear leukocytes [PMNs]) (PubMed:15546957). Also detected in macrophages mycobacterial granulomas (PubMed:23749634). Expressed in group2 innate lymphoid cells (ILC2s) during lung disease (PubMed:27043409).</text>
</comment>
<comment type="induction">
    <text>By arginine or homoarginine.</text>
</comment>
<comment type="disease" evidence="5 16 18 20">
    <disease id="DI-00132">
        <name>Argininemia</name>
        <acronym>ARGIN</acronym>
        <description>A rare autosomal recessive disorder of the urea cycle. Arginine is elevated in the blood and cerebrospinal fluid, and periodic hyperammonemia occurs. Clinical manifestations include developmental delay, seizures, intellectual disability, hypotonia, ataxia and progressive spastic quadriplegia.</description>
        <dbReference type="MIM" id="207800"/>
    </disease>
    <text>The disease is caused by variants affecting the gene represented in this entry.</text>
</comment>
<comment type="miscellaneous">
    <molecule>Isoform 2</molecule>
    <text evidence="24">May be due to a competing acceptor splice site.</text>
</comment>
<comment type="similarity">
    <text evidence="4">Belongs to the arginase family.</text>
</comment>
<comment type="online information" name="Wikipedia">
    <link uri="https://en.wikipedia.org/wiki/Arginase"/>
    <text>Arginase entry</text>
</comment>
<name>ARGI1_HUMAN</name>
<keyword id="KW-0002">3D-structure</keyword>
<keyword id="KW-1064">Adaptive immunity</keyword>
<keyword id="KW-0025">Alternative splicing</keyword>
<keyword id="KW-0056">Arginine metabolism</keyword>
<keyword id="KW-0963">Cytoplasm</keyword>
<keyword id="KW-0225">Disease variant</keyword>
<keyword id="KW-0378">Hydrolase</keyword>
<keyword id="KW-0391">Immunity</keyword>
<keyword id="KW-0399">Innate immunity</keyword>
<keyword id="KW-0464">Manganese</keyword>
<keyword id="KW-0479">Metal-binding</keyword>
<keyword id="KW-0597">Phosphoprotein</keyword>
<keyword id="KW-1267">Proteomics identification</keyword>
<keyword id="KW-1185">Reference proteome</keyword>
<keyword id="KW-0835">Urea cycle</keyword>
<dbReference type="EC" id="3.5.3.1" evidence="8 11 14"/>
<dbReference type="EMBL" id="M14502">
    <property type="protein sequence ID" value="AAA51776.1"/>
    <property type="molecule type" value="mRNA"/>
</dbReference>
<dbReference type="EMBL" id="X12662">
    <property type="protein sequence ID" value="CAA31188.1"/>
    <property type="molecule type" value="Genomic_DNA"/>
</dbReference>
<dbReference type="EMBL" id="X12663">
    <property type="protein sequence ID" value="CAA31188.1"/>
    <property type="status" value="JOINED"/>
    <property type="molecule type" value="Genomic_DNA"/>
</dbReference>
<dbReference type="EMBL" id="X12664">
    <property type="protein sequence ID" value="CAA31188.1"/>
    <property type="status" value="JOINED"/>
    <property type="molecule type" value="Genomic_DNA"/>
</dbReference>
<dbReference type="EMBL" id="X12665">
    <property type="protein sequence ID" value="CAA31188.1"/>
    <property type="status" value="JOINED"/>
    <property type="molecule type" value="Genomic_DNA"/>
</dbReference>
<dbReference type="EMBL" id="X12666">
    <property type="protein sequence ID" value="CAA31188.1"/>
    <property type="status" value="JOINED"/>
    <property type="molecule type" value="Genomic_DNA"/>
</dbReference>
<dbReference type="EMBL" id="X12667">
    <property type="protein sequence ID" value="CAA31188.1"/>
    <property type="status" value="JOINED"/>
    <property type="molecule type" value="Genomic_DNA"/>
</dbReference>
<dbReference type="EMBL" id="X12668">
    <property type="protein sequence ID" value="CAA31188.1"/>
    <property type="status" value="JOINED"/>
    <property type="molecule type" value="Genomic_DNA"/>
</dbReference>
<dbReference type="EMBL" id="X12669">
    <property type="protein sequence ID" value="CAA31188.1"/>
    <property type="status" value="JOINED"/>
    <property type="molecule type" value="Genomic_DNA"/>
</dbReference>
<dbReference type="EMBL" id="AY074488">
    <property type="protein sequence ID" value="AAL71547.1"/>
    <property type="molecule type" value="mRNA"/>
</dbReference>
<dbReference type="EMBL" id="BT006741">
    <property type="protein sequence ID" value="AAP35387.1"/>
    <property type="molecule type" value="mRNA"/>
</dbReference>
<dbReference type="EMBL" id="AL121575">
    <property type="protein sequence ID" value="CAB92071.1"/>
    <property type="molecule type" value="Genomic_DNA"/>
</dbReference>
<dbReference type="EMBL" id="AL121575">
    <property type="protein sequence ID" value="CAI23317.1"/>
    <property type="molecule type" value="Genomic_DNA"/>
</dbReference>
<dbReference type="EMBL" id="AL121575">
    <property type="protein sequence ID" value="CAI23318.1"/>
    <property type="molecule type" value="Genomic_DNA"/>
</dbReference>
<dbReference type="EMBL" id="BC005321">
    <property type="protein sequence ID" value="AAH05321.1"/>
    <property type="molecule type" value="mRNA"/>
</dbReference>
<dbReference type="EMBL" id="BC020653">
    <property type="protein sequence ID" value="AAH20653.1"/>
    <property type="molecule type" value="mRNA"/>
</dbReference>
<dbReference type="CCDS" id="CCDS5145.1">
    <molecule id="P05089-1"/>
</dbReference>
<dbReference type="CCDS" id="CCDS59038.1">
    <molecule id="P05089-2"/>
</dbReference>
<dbReference type="PIR" id="S02132">
    <property type="entry name" value="A26370"/>
</dbReference>
<dbReference type="RefSeq" id="NP_000036.2">
    <molecule id="P05089-1"/>
    <property type="nucleotide sequence ID" value="NM_000045.3"/>
</dbReference>
<dbReference type="RefSeq" id="NP_001231367.1">
    <molecule id="P05089-2"/>
    <property type="nucleotide sequence ID" value="NM_001244438.2"/>
</dbReference>
<dbReference type="PDB" id="1WVA">
    <property type="method" value="X-ray"/>
    <property type="resolution" value="1.94 A"/>
    <property type="chains" value="A/B=1-322"/>
</dbReference>
<dbReference type="PDB" id="1WVB">
    <property type="method" value="X-ray"/>
    <property type="resolution" value="2.30 A"/>
    <property type="chains" value="A/B=1-322"/>
</dbReference>
<dbReference type="PDB" id="2AEB">
    <property type="method" value="X-ray"/>
    <property type="resolution" value="1.29 A"/>
    <property type="chains" value="A/B=1-322"/>
</dbReference>
<dbReference type="PDB" id="2PHA">
    <property type="method" value="X-ray"/>
    <property type="resolution" value="1.90 A"/>
    <property type="chains" value="A/B=1-322"/>
</dbReference>
<dbReference type="PDB" id="2PHO">
    <property type="method" value="X-ray"/>
    <property type="resolution" value="1.95 A"/>
    <property type="chains" value="A/B=1-322"/>
</dbReference>
<dbReference type="PDB" id="2PLL">
    <property type="method" value="X-ray"/>
    <property type="resolution" value="1.90 A"/>
    <property type="chains" value="A/B=1-322"/>
</dbReference>
<dbReference type="PDB" id="2ZAV">
    <property type="method" value="X-ray"/>
    <property type="resolution" value="1.70 A"/>
    <property type="chains" value="A/B=1-322"/>
</dbReference>
<dbReference type="PDB" id="3DJ8">
    <property type="method" value="X-ray"/>
    <property type="resolution" value="1.51 A"/>
    <property type="chains" value="A/B=1-322"/>
</dbReference>
<dbReference type="PDB" id="3E6K">
    <property type="method" value="X-ray"/>
    <property type="resolution" value="2.10 A"/>
    <property type="chains" value="A/B=1-322"/>
</dbReference>
<dbReference type="PDB" id="3E6V">
    <property type="method" value="X-ray"/>
    <property type="resolution" value="1.72 A"/>
    <property type="chains" value="A/B=1-322"/>
</dbReference>
<dbReference type="PDB" id="3F80">
    <property type="method" value="X-ray"/>
    <property type="resolution" value="1.60 A"/>
    <property type="chains" value="A/B=1-322"/>
</dbReference>
<dbReference type="PDB" id="3GMZ">
    <property type="method" value="X-ray"/>
    <property type="resolution" value="1.43 A"/>
    <property type="chains" value="A/B=1-322"/>
</dbReference>
<dbReference type="PDB" id="3GN0">
    <property type="method" value="X-ray"/>
    <property type="resolution" value="1.70 A"/>
    <property type="chains" value="A/B=1-322"/>
</dbReference>
<dbReference type="PDB" id="3KV2">
    <property type="method" value="X-ray"/>
    <property type="resolution" value="1.55 A"/>
    <property type="chains" value="A/B=1-322"/>
</dbReference>
<dbReference type="PDB" id="3LP4">
    <property type="method" value="X-ray"/>
    <property type="resolution" value="1.90 A"/>
    <property type="chains" value="A/B=1-322"/>
</dbReference>
<dbReference type="PDB" id="3LP7">
    <property type="method" value="X-ray"/>
    <property type="resolution" value="2.04 A"/>
    <property type="chains" value="A/B=1-322"/>
</dbReference>
<dbReference type="PDB" id="3MFV">
    <property type="method" value="X-ray"/>
    <property type="resolution" value="1.90 A"/>
    <property type="chains" value="A/B=1-322"/>
</dbReference>
<dbReference type="PDB" id="3MFW">
    <property type="method" value="X-ray"/>
    <property type="resolution" value="1.47 A"/>
    <property type="chains" value="A/B=1-322"/>
</dbReference>
<dbReference type="PDB" id="3MJL">
    <property type="method" value="X-ray"/>
    <property type="resolution" value="1.90 A"/>
    <property type="chains" value="A/B=1-322"/>
</dbReference>
<dbReference type="PDB" id="3SJT">
    <property type="method" value="X-ray"/>
    <property type="resolution" value="1.60 A"/>
    <property type="chains" value="A/B=1-322"/>
</dbReference>
<dbReference type="PDB" id="3SKK">
    <property type="method" value="X-ray"/>
    <property type="resolution" value="1.70 A"/>
    <property type="chains" value="A/B=1-322"/>
</dbReference>
<dbReference type="PDB" id="3TF3">
    <property type="method" value="X-ray"/>
    <property type="resolution" value="1.64 A"/>
    <property type="chains" value="A/B=1-322"/>
</dbReference>
<dbReference type="PDB" id="3TH7">
    <property type="method" value="X-ray"/>
    <property type="resolution" value="2.10 A"/>
    <property type="chains" value="A/B=1-322"/>
</dbReference>
<dbReference type="PDB" id="3THE">
    <property type="method" value="X-ray"/>
    <property type="resolution" value="1.97 A"/>
    <property type="chains" value="A/B=1-322"/>
</dbReference>
<dbReference type="PDB" id="3THH">
    <property type="method" value="X-ray"/>
    <property type="resolution" value="1.85 A"/>
    <property type="chains" value="A/B=1-322"/>
</dbReference>
<dbReference type="PDB" id="3THJ">
    <property type="method" value="X-ray"/>
    <property type="resolution" value="1.50 A"/>
    <property type="chains" value="A/B=1-322"/>
</dbReference>
<dbReference type="PDB" id="4FCI">
    <property type="method" value="X-ray"/>
    <property type="resolution" value="1.82 A"/>
    <property type="chains" value="A/B=1-322"/>
</dbReference>
<dbReference type="PDB" id="4FCK">
    <property type="method" value="X-ray"/>
    <property type="resolution" value="1.90 A"/>
    <property type="chains" value="A/B=1-322"/>
</dbReference>
<dbReference type="PDB" id="4GSM">
    <property type="method" value="X-ray"/>
    <property type="resolution" value="1.70 A"/>
    <property type="chains" value="A/B=1-322"/>
</dbReference>
<dbReference type="PDB" id="4GSV">
    <property type="method" value="X-ray"/>
    <property type="resolution" value="1.48 A"/>
    <property type="chains" value="A/B=1-322"/>
</dbReference>
<dbReference type="PDB" id="4GSZ">
    <property type="method" value="X-ray"/>
    <property type="resolution" value="2.20 A"/>
    <property type="chains" value="A/B=1-322"/>
</dbReference>
<dbReference type="PDB" id="4GWC">
    <property type="method" value="X-ray"/>
    <property type="resolution" value="1.90 A"/>
    <property type="chains" value="A/B=1-322"/>
</dbReference>
<dbReference type="PDB" id="4GWD">
    <property type="method" value="X-ray"/>
    <property type="resolution" value="1.53 A"/>
    <property type="chains" value="A/B=1-322"/>
</dbReference>
<dbReference type="PDB" id="4HWW">
    <property type="method" value="X-ray"/>
    <property type="resolution" value="1.30 A"/>
    <property type="chains" value="A/B=5-318"/>
</dbReference>
<dbReference type="PDB" id="4HXQ">
    <property type="method" value="X-ray"/>
    <property type="resolution" value="1.45 A"/>
    <property type="chains" value="A/B=5-318"/>
</dbReference>
<dbReference type="PDB" id="4IE1">
    <property type="method" value="X-ray"/>
    <property type="resolution" value="2.00 A"/>
    <property type="chains" value="A/B=5-318"/>
</dbReference>
<dbReference type="PDB" id="6Q92">
    <property type="method" value="X-ray"/>
    <property type="resolution" value="1.50 A"/>
    <property type="chains" value="A/B=1-322"/>
</dbReference>
<dbReference type="PDB" id="6Q9P">
    <property type="method" value="X-ray"/>
    <property type="resolution" value="1.66 A"/>
    <property type="chains" value="A/B=1-322"/>
</dbReference>
<dbReference type="PDB" id="6QAF">
    <property type="method" value="X-ray"/>
    <property type="resolution" value="1.61 A"/>
    <property type="chains" value="A/B=1-322"/>
</dbReference>
<dbReference type="PDB" id="6V7C">
    <property type="method" value="X-ray"/>
    <property type="resolution" value="1.80 A"/>
    <property type="chains" value="A/B/C/D/E/F=1-322"/>
</dbReference>
<dbReference type="PDB" id="6V7D">
    <property type="method" value="X-ray"/>
    <property type="resolution" value="1.82 A"/>
    <property type="chains" value="A/B/C/D/E/F=1-322"/>
</dbReference>
<dbReference type="PDB" id="6V7E">
    <property type="method" value="X-ray"/>
    <property type="resolution" value="1.99 A"/>
    <property type="chains" value="A/B/C/D/E/F=1-322"/>
</dbReference>
<dbReference type="PDB" id="6V7F">
    <property type="method" value="X-ray"/>
    <property type="resolution" value="2.02 A"/>
    <property type="chains" value="A/B/C/D/E/F=1-322"/>
</dbReference>
<dbReference type="PDB" id="7K4G">
    <property type="method" value="X-ray"/>
    <property type="resolution" value="1.80 A"/>
    <property type="chains" value="A/B/C/D/E/F=1-322"/>
</dbReference>
<dbReference type="PDB" id="7K4H">
    <property type="method" value="X-ray"/>
    <property type="resolution" value="1.65 A"/>
    <property type="chains" value="A/B/C/D/E/F=1-322"/>
</dbReference>
<dbReference type="PDB" id="7K4I">
    <property type="method" value="X-ray"/>
    <property type="resolution" value="1.98 A"/>
    <property type="chains" value="A/B/C/D/E/F=1-322"/>
</dbReference>
<dbReference type="PDB" id="7K4J">
    <property type="method" value="X-ray"/>
    <property type="resolution" value="1.94 A"/>
    <property type="chains" value="A/B/C/D/E/F=1-322"/>
</dbReference>
<dbReference type="PDB" id="7K4K">
    <property type="method" value="X-ray"/>
    <property type="resolution" value="2.27 A"/>
    <property type="chains" value="A/B/C/D/E/F=1-322"/>
</dbReference>
<dbReference type="PDB" id="7KLK">
    <property type="method" value="X-ray"/>
    <property type="resolution" value="1.80 A"/>
    <property type="chains" value="A/B/C/D/E/F=1-322"/>
</dbReference>
<dbReference type="PDB" id="7KLL">
    <property type="method" value="X-ray"/>
    <property type="resolution" value="2.22 A"/>
    <property type="chains" value="A/B/C/D/E/F=1-322"/>
</dbReference>
<dbReference type="PDB" id="7KLM">
    <property type="method" value="X-ray"/>
    <property type="resolution" value="2.27 A"/>
    <property type="chains" value="A/B/C/D/E/F=1-322"/>
</dbReference>
<dbReference type="PDB" id="7LEX">
    <property type="method" value="EM"/>
    <property type="resolution" value="3.60 A"/>
    <property type="chains" value="A/B/C/J/M/N=1-322"/>
</dbReference>
<dbReference type="PDB" id="7LEY">
    <property type="method" value="EM"/>
    <property type="resolution" value="3.05 A"/>
    <property type="chains" value="A/B/C=1-322"/>
</dbReference>
<dbReference type="PDB" id="7LEZ">
    <property type="method" value="EM"/>
    <property type="resolution" value="4.15 A"/>
    <property type="chains" value="A/B/C/J/M/N=1-322"/>
</dbReference>
<dbReference type="PDB" id="7LF0">
    <property type="method" value="EM"/>
    <property type="resolution" value="3.68 A"/>
    <property type="chains" value="A/B/C/J/M/N=1-322"/>
</dbReference>
<dbReference type="PDB" id="7LF1">
    <property type="method" value="EM"/>
    <property type="resolution" value="4.04 A"/>
    <property type="chains" value="A/B/C/J/M/N=1-322"/>
</dbReference>
<dbReference type="PDB" id="7LF2">
    <property type="method" value="EM"/>
    <property type="resolution" value="3.72 A"/>
    <property type="chains" value="A/B/C/J/Q/R=1-322"/>
</dbReference>
<dbReference type="PDB" id="8AUP">
    <property type="method" value="X-ray"/>
    <property type="resolution" value="2.17 A"/>
    <property type="chains" value="A/B/C/D/E/F=1-322"/>
</dbReference>
<dbReference type="PDB" id="8E5M">
    <property type="method" value="X-ray"/>
    <property type="resolution" value="1.84 A"/>
    <property type="chains" value="A/B/C/D/E/F=1-322"/>
</dbReference>
<dbReference type="PDB" id="8E5N">
    <property type="method" value="X-ray"/>
    <property type="resolution" value="2.54 A"/>
    <property type="chains" value="A/B/C/D/E/F=1-322"/>
</dbReference>
<dbReference type="PDBsum" id="1WVA"/>
<dbReference type="PDBsum" id="1WVB"/>
<dbReference type="PDBsum" id="2AEB"/>
<dbReference type="PDBsum" id="2PHA"/>
<dbReference type="PDBsum" id="2PHO"/>
<dbReference type="PDBsum" id="2PLL"/>
<dbReference type="PDBsum" id="2ZAV"/>
<dbReference type="PDBsum" id="3DJ8"/>
<dbReference type="PDBsum" id="3E6K"/>
<dbReference type="PDBsum" id="3E6V"/>
<dbReference type="PDBsum" id="3F80"/>
<dbReference type="PDBsum" id="3GMZ"/>
<dbReference type="PDBsum" id="3GN0"/>
<dbReference type="PDBsum" id="3KV2"/>
<dbReference type="PDBsum" id="3LP4"/>
<dbReference type="PDBsum" id="3LP7"/>
<dbReference type="PDBsum" id="3MFV"/>
<dbReference type="PDBsum" id="3MFW"/>
<dbReference type="PDBsum" id="3MJL"/>
<dbReference type="PDBsum" id="3SJT"/>
<dbReference type="PDBsum" id="3SKK"/>
<dbReference type="PDBsum" id="3TF3"/>
<dbReference type="PDBsum" id="3TH7"/>
<dbReference type="PDBsum" id="3THE"/>
<dbReference type="PDBsum" id="3THH"/>
<dbReference type="PDBsum" id="3THJ"/>
<dbReference type="PDBsum" id="4FCI"/>
<dbReference type="PDBsum" id="4FCK"/>
<dbReference type="PDBsum" id="4GSM"/>
<dbReference type="PDBsum" id="4GSV"/>
<dbReference type="PDBsum" id="4GSZ"/>
<dbReference type="PDBsum" id="4GWC"/>
<dbReference type="PDBsum" id="4GWD"/>
<dbReference type="PDBsum" id="4HWW"/>
<dbReference type="PDBsum" id="4HXQ"/>
<dbReference type="PDBsum" id="4IE1"/>
<dbReference type="PDBsum" id="6Q92"/>
<dbReference type="PDBsum" id="6Q9P"/>
<dbReference type="PDBsum" id="6QAF"/>
<dbReference type="PDBsum" id="6V7C"/>
<dbReference type="PDBsum" id="6V7D"/>
<dbReference type="PDBsum" id="6V7E"/>
<dbReference type="PDBsum" id="6V7F"/>
<dbReference type="PDBsum" id="7K4G"/>
<dbReference type="PDBsum" id="7K4H"/>
<dbReference type="PDBsum" id="7K4I"/>
<dbReference type="PDBsum" id="7K4J"/>
<dbReference type="PDBsum" id="7K4K"/>
<dbReference type="PDBsum" id="7KLK"/>
<dbReference type="PDBsum" id="7KLL"/>
<dbReference type="PDBsum" id="7KLM"/>
<dbReference type="PDBsum" id="7LEX"/>
<dbReference type="PDBsum" id="7LEY"/>
<dbReference type="PDBsum" id="7LEZ"/>
<dbReference type="PDBsum" id="7LF0"/>
<dbReference type="PDBsum" id="7LF1"/>
<dbReference type="PDBsum" id="7LF2"/>
<dbReference type="PDBsum" id="8AUP"/>
<dbReference type="PDBsum" id="8E5M"/>
<dbReference type="PDBsum" id="8E5N"/>
<dbReference type="EMDB" id="EMD-23293"/>
<dbReference type="EMDB" id="EMD-23294"/>
<dbReference type="EMDB" id="EMD-23295"/>
<dbReference type="EMDB" id="EMD-23296"/>
<dbReference type="EMDB" id="EMD-23297"/>
<dbReference type="EMDB" id="EMD-23298"/>
<dbReference type="SMR" id="P05089"/>
<dbReference type="BioGRID" id="106878">
    <property type="interactions" value="158"/>
</dbReference>
<dbReference type="FunCoup" id="P05089">
    <property type="interactions" value="519"/>
</dbReference>
<dbReference type="IntAct" id="P05089">
    <property type="interactions" value="70"/>
</dbReference>
<dbReference type="MINT" id="P05089"/>
<dbReference type="STRING" id="9606.ENSP00000349446"/>
<dbReference type="BindingDB" id="P05089"/>
<dbReference type="ChEMBL" id="CHEMBL1075097"/>
<dbReference type="DrugBank" id="DB01983">
    <property type="generic name" value="2(S)-Amino-6-Boronohexanoic Acid"/>
</dbReference>
<dbReference type="DrugBank" id="DB04585">
    <property type="generic name" value="DEHYDRO-2(S)-AMINO-6-BORONOHEXANOIC ACID"/>
</dbReference>
<dbReference type="DrugBank" id="DB04197">
    <property type="generic name" value="Descarboxy-nor-N(Omega)-Hydroxy-L-Arginine"/>
</dbReference>
<dbReference type="DrugBank" id="DB02499">
    <property type="generic name" value="Dinor-N(Omega)-Hydroxy-L-Arginine"/>
</dbReference>
<dbReference type="DrugBank" id="DB06757">
    <property type="generic name" value="Manganese cation"/>
</dbReference>
<dbReference type="DrugBank" id="DB03144">
    <property type="generic name" value="N(5)-[(hydroxyamino)(imino)methyl]-L-ornithine"/>
</dbReference>
<dbReference type="DrugBank" id="DB02381">
    <property type="generic name" value="nor-NOHA"/>
</dbReference>
<dbReference type="DrugBank" id="DB00129">
    <property type="generic name" value="Ornithine"/>
</dbReference>
<dbReference type="DrugBank" id="DB04530">
    <property type="generic name" value="S,S-(2-Hydroxyethyl)Thiocysteine"/>
</dbReference>
<dbReference type="DrugBank" id="DB03731">
    <property type="generic name" value="S-2-(Boronoethyl)-L-Cysteine"/>
</dbReference>
<dbReference type="DrugBank" id="DB04648">
    <property type="generic name" value="S-propylamine-L-cysteine"/>
</dbReference>
<dbReference type="DrugBank" id="DB02689">
    <property type="generic name" value="S-{2-[Amino(Dihydroxy)-Lambda~4~-Sulfanyl]Ethyl}-D-Cysteine"/>
</dbReference>
<dbReference type="DrugBank" id="DB03904">
    <property type="generic name" value="Urea"/>
</dbReference>
<dbReference type="GuidetoPHARMACOLOGY" id="1244"/>
<dbReference type="GlyGen" id="P05089">
    <property type="glycosylation" value="1 site, 1 O-linked glycan (1 site)"/>
</dbReference>
<dbReference type="iPTMnet" id="P05089"/>
<dbReference type="PhosphoSitePlus" id="P05089"/>
<dbReference type="SwissPalm" id="P05089"/>
<dbReference type="BioMuta" id="ARG1"/>
<dbReference type="DMDM" id="12230985"/>
<dbReference type="jPOST" id="P05089"/>
<dbReference type="MassIVE" id="P05089"/>
<dbReference type="PaxDb" id="9606-ENSP00000349446"/>
<dbReference type="PeptideAtlas" id="P05089"/>
<dbReference type="PRIDE" id="P05089"/>
<dbReference type="ProteomicsDB" id="51784">
    <molecule id="P05089-1"/>
</dbReference>
<dbReference type="ProteomicsDB" id="51785">
    <molecule id="P05089-2"/>
</dbReference>
<dbReference type="ProteomicsDB" id="51786">
    <molecule id="P05089-3"/>
</dbReference>
<dbReference type="ABCD" id="P05089">
    <property type="antibodies" value="4 sequenced antibodies"/>
</dbReference>
<dbReference type="Antibodypedia" id="779">
    <property type="antibodies" value="1348 antibodies from 51 providers"/>
</dbReference>
<dbReference type="CPTC" id="P05089">
    <property type="antibodies" value="1 antibody"/>
</dbReference>
<dbReference type="DNASU" id="383"/>
<dbReference type="Ensembl" id="ENST00000356962.2">
    <molecule id="P05089-2"/>
    <property type="protein sequence ID" value="ENSP00000349446.2"/>
    <property type="gene ID" value="ENSG00000118520.16"/>
</dbReference>
<dbReference type="Ensembl" id="ENST00000368087.8">
    <molecule id="P05089-1"/>
    <property type="protein sequence ID" value="ENSP00000357066.3"/>
    <property type="gene ID" value="ENSG00000118520.16"/>
</dbReference>
<dbReference type="GeneID" id="383"/>
<dbReference type="KEGG" id="hsa:383"/>
<dbReference type="MANE-Select" id="ENST00000368087.8">
    <property type="protein sequence ID" value="ENSP00000357066.3"/>
    <property type="RefSeq nucleotide sequence ID" value="NM_000045.4"/>
    <property type="RefSeq protein sequence ID" value="NP_000036.2"/>
</dbReference>
<dbReference type="UCSC" id="uc003qcp.3">
    <molecule id="P05089-1"/>
    <property type="organism name" value="human"/>
</dbReference>
<dbReference type="AGR" id="HGNC:663"/>
<dbReference type="CTD" id="383"/>
<dbReference type="DisGeNET" id="383"/>
<dbReference type="GeneCards" id="ARG1"/>
<dbReference type="GeneReviews" id="ARG1"/>
<dbReference type="HGNC" id="HGNC:663">
    <property type="gene designation" value="ARG1"/>
</dbReference>
<dbReference type="HPA" id="ENSG00000118520">
    <property type="expression patterns" value="Tissue enriched (liver)"/>
</dbReference>
<dbReference type="MalaCards" id="ARG1"/>
<dbReference type="MIM" id="207800">
    <property type="type" value="phenotype"/>
</dbReference>
<dbReference type="MIM" id="608313">
    <property type="type" value="gene"/>
</dbReference>
<dbReference type="neXtProt" id="NX_P05089"/>
<dbReference type="OpenTargets" id="ENSG00000118520"/>
<dbReference type="Orphanet" id="90">
    <property type="disease" value="Argininemia"/>
</dbReference>
<dbReference type="PharmGKB" id="PA24947"/>
<dbReference type="VEuPathDB" id="HostDB:ENSG00000118520"/>
<dbReference type="eggNOG" id="KOG2965">
    <property type="taxonomic scope" value="Eukaryota"/>
</dbReference>
<dbReference type="GeneTree" id="ENSGT00950000183195"/>
<dbReference type="HOGENOM" id="CLU_039478_6_1_1"/>
<dbReference type="InParanoid" id="P05089"/>
<dbReference type="OMA" id="FSWMTPC"/>
<dbReference type="OrthoDB" id="9992747at2759"/>
<dbReference type="PAN-GO" id="P05089">
    <property type="GO annotations" value="5 GO annotations based on evolutionary models"/>
</dbReference>
<dbReference type="PhylomeDB" id="P05089"/>
<dbReference type="TreeFam" id="TF300034"/>
<dbReference type="BioCyc" id="MetaCyc:HS04231-MONOMER"/>
<dbReference type="BRENDA" id="3.5.3.1">
    <property type="organism ID" value="2681"/>
</dbReference>
<dbReference type="PathwayCommons" id="P05089"/>
<dbReference type="Reactome" id="R-HSA-6798695">
    <property type="pathway name" value="Neutrophil degranulation"/>
</dbReference>
<dbReference type="Reactome" id="R-HSA-70635">
    <property type="pathway name" value="Urea cycle"/>
</dbReference>
<dbReference type="SABIO-RK" id="P05089"/>
<dbReference type="SignaLink" id="P05089"/>
<dbReference type="SIGNOR" id="P05089"/>
<dbReference type="UniPathway" id="UPA00158">
    <property type="reaction ID" value="UER00270"/>
</dbReference>
<dbReference type="BioGRID-ORCS" id="383">
    <property type="hits" value="14 hits in 1147 CRISPR screens"/>
</dbReference>
<dbReference type="CD-CODE" id="232F8A39">
    <property type="entry name" value="P-body"/>
</dbReference>
<dbReference type="ChiTaRS" id="ARG1">
    <property type="organism name" value="human"/>
</dbReference>
<dbReference type="EvolutionaryTrace" id="P05089"/>
<dbReference type="GenomeRNAi" id="383"/>
<dbReference type="Pharos" id="P05089">
    <property type="development level" value="Tchem"/>
</dbReference>
<dbReference type="PRO" id="PR:P05089"/>
<dbReference type="Proteomes" id="UP000005640">
    <property type="component" value="Chromosome 6"/>
</dbReference>
<dbReference type="RNAct" id="P05089">
    <property type="molecule type" value="protein"/>
</dbReference>
<dbReference type="Bgee" id="ENSG00000118520">
    <property type="expression patterns" value="Expressed in right lobe of liver and 122 other cell types or tissues"/>
</dbReference>
<dbReference type="ExpressionAtlas" id="P05089">
    <property type="expression patterns" value="baseline and differential"/>
</dbReference>
<dbReference type="GO" id="GO:0035578">
    <property type="term" value="C:azurophil granule lumen"/>
    <property type="evidence" value="ECO:0000304"/>
    <property type="project" value="Reactome"/>
</dbReference>
<dbReference type="GO" id="GO:0005737">
    <property type="term" value="C:cytoplasm"/>
    <property type="evidence" value="ECO:0000318"/>
    <property type="project" value="GO_Central"/>
</dbReference>
<dbReference type="GO" id="GO:0005829">
    <property type="term" value="C:cytosol"/>
    <property type="evidence" value="ECO:0000318"/>
    <property type="project" value="GO_Central"/>
</dbReference>
<dbReference type="GO" id="GO:0005576">
    <property type="term" value="C:extracellular region"/>
    <property type="evidence" value="ECO:0000304"/>
    <property type="project" value="Reactome"/>
</dbReference>
<dbReference type="GO" id="GO:0005615">
    <property type="term" value="C:extracellular space"/>
    <property type="evidence" value="ECO:0000314"/>
    <property type="project" value="UniProtKB"/>
</dbReference>
<dbReference type="GO" id="GO:0005634">
    <property type="term" value="C:nucleus"/>
    <property type="evidence" value="ECO:0007005"/>
    <property type="project" value="UniProtKB"/>
</dbReference>
<dbReference type="GO" id="GO:0035580">
    <property type="term" value="C:specific granule lumen"/>
    <property type="evidence" value="ECO:0000304"/>
    <property type="project" value="Reactome"/>
</dbReference>
<dbReference type="GO" id="GO:0004053">
    <property type="term" value="F:arginase activity"/>
    <property type="evidence" value="ECO:0000318"/>
    <property type="project" value="GO_Central"/>
</dbReference>
<dbReference type="GO" id="GO:0030145">
    <property type="term" value="F:manganese ion binding"/>
    <property type="evidence" value="ECO:0000318"/>
    <property type="project" value="GO_Central"/>
</dbReference>
<dbReference type="GO" id="GO:0002250">
    <property type="term" value="P:adaptive immune response"/>
    <property type="evidence" value="ECO:0007669"/>
    <property type="project" value="UniProtKB-KW"/>
</dbReference>
<dbReference type="GO" id="GO:0006527">
    <property type="term" value="P:arginine catabolic process"/>
    <property type="evidence" value="ECO:0000304"/>
    <property type="project" value="ProtInc"/>
</dbReference>
<dbReference type="GO" id="GO:0019547">
    <property type="term" value="P:arginine catabolic process to ornithine"/>
    <property type="evidence" value="ECO:0000318"/>
    <property type="project" value="GO_Central"/>
</dbReference>
<dbReference type="GO" id="GO:0042832">
    <property type="term" value="P:defense response to protozoan"/>
    <property type="evidence" value="ECO:0007669"/>
    <property type="project" value="Ensembl"/>
</dbReference>
<dbReference type="GO" id="GO:0045087">
    <property type="term" value="P:innate immune response"/>
    <property type="evidence" value="ECO:0007669"/>
    <property type="project" value="UniProtKB-KW"/>
</dbReference>
<dbReference type="GO" id="GO:0046007">
    <property type="term" value="P:negative regulation of activated T cell proliferation"/>
    <property type="evidence" value="ECO:0007669"/>
    <property type="project" value="Ensembl"/>
</dbReference>
<dbReference type="GO" id="GO:0042130">
    <property type="term" value="P:negative regulation of T cell proliferation"/>
    <property type="evidence" value="ECO:0000314"/>
    <property type="project" value="UniProtKB"/>
</dbReference>
<dbReference type="GO" id="GO:2000552">
    <property type="term" value="P:negative regulation of T-helper 2 cell cytokine production"/>
    <property type="evidence" value="ECO:0007669"/>
    <property type="project" value="Ensembl"/>
</dbReference>
<dbReference type="GO" id="GO:0060336">
    <property type="term" value="P:negative regulation of type II interferon-mediated signaling pathway"/>
    <property type="evidence" value="ECO:0000315"/>
    <property type="project" value="UniProtKB"/>
</dbReference>
<dbReference type="GO" id="GO:0070965">
    <property type="term" value="P:positive regulation of neutrophil mediated killing of fungus"/>
    <property type="evidence" value="ECO:0000315"/>
    <property type="project" value="UniProtKB"/>
</dbReference>
<dbReference type="GO" id="GO:0009624">
    <property type="term" value="P:response to nematode"/>
    <property type="evidence" value="ECO:0007669"/>
    <property type="project" value="Ensembl"/>
</dbReference>
<dbReference type="GO" id="GO:0000050">
    <property type="term" value="P:urea cycle"/>
    <property type="evidence" value="ECO:0007669"/>
    <property type="project" value="UniProtKB-UniPathway"/>
</dbReference>
<dbReference type="CDD" id="cd11587">
    <property type="entry name" value="Arginase-like"/>
    <property type="match status" value="1"/>
</dbReference>
<dbReference type="FunFam" id="3.40.800.10:FF:000011">
    <property type="entry name" value="Arginase-1"/>
    <property type="match status" value="1"/>
</dbReference>
<dbReference type="Gene3D" id="3.40.800.10">
    <property type="entry name" value="Ureohydrolase domain"/>
    <property type="match status" value="1"/>
</dbReference>
<dbReference type="InterPro" id="IPR014033">
    <property type="entry name" value="Arginase"/>
</dbReference>
<dbReference type="InterPro" id="IPR006035">
    <property type="entry name" value="Ureohydrolase"/>
</dbReference>
<dbReference type="InterPro" id="IPR023696">
    <property type="entry name" value="Ureohydrolase_dom_sf"/>
</dbReference>
<dbReference type="InterPro" id="IPR020855">
    <property type="entry name" value="Ureohydrolase_Mn_BS"/>
</dbReference>
<dbReference type="NCBIfam" id="TIGR01229">
    <property type="entry name" value="rocF_arginase"/>
    <property type="match status" value="1"/>
</dbReference>
<dbReference type="PANTHER" id="PTHR43782">
    <property type="entry name" value="ARGINASE"/>
    <property type="match status" value="1"/>
</dbReference>
<dbReference type="PANTHER" id="PTHR43782:SF2">
    <property type="entry name" value="ARGINASE-1"/>
    <property type="match status" value="1"/>
</dbReference>
<dbReference type="Pfam" id="PF00491">
    <property type="entry name" value="Arginase"/>
    <property type="match status" value="1"/>
</dbReference>
<dbReference type="PIRSF" id="PIRSF036979">
    <property type="entry name" value="Arginase"/>
    <property type="match status" value="1"/>
</dbReference>
<dbReference type="PRINTS" id="PR00116">
    <property type="entry name" value="ARGINASE"/>
</dbReference>
<dbReference type="SUPFAM" id="SSF52768">
    <property type="entry name" value="Arginase/deacetylase"/>
    <property type="match status" value="1"/>
</dbReference>
<dbReference type="PROSITE" id="PS01053">
    <property type="entry name" value="ARGINASE_1"/>
    <property type="match status" value="1"/>
</dbReference>
<dbReference type="PROSITE" id="PS51409">
    <property type="entry name" value="ARGINASE_2"/>
    <property type="match status" value="1"/>
</dbReference>
<proteinExistence type="evidence at protein level"/>
<organism>
    <name type="scientific">Homo sapiens</name>
    <name type="common">Human</name>
    <dbReference type="NCBI Taxonomy" id="9606"/>
    <lineage>
        <taxon>Eukaryota</taxon>
        <taxon>Metazoa</taxon>
        <taxon>Chordata</taxon>
        <taxon>Craniata</taxon>
        <taxon>Vertebrata</taxon>
        <taxon>Euteleostomi</taxon>
        <taxon>Mammalia</taxon>
        <taxon>Eutheria</taxon>
        <taxon>Euarchontoglires</taxon>
        <taxon>Primates</taxon>
        <taxon>Haplorrhini</taxon>
        <taxon>Catarrhini</taxon>
        <taxon>Hominidae</taxon>
        <taxon>Homo</taxon>
    </lineage>
</organism>
<reference key="1">
    <citation type="journal article" date="1987" name="Proc. Natl. Acad. Sci. U.S.A.">
        <title>Molecular cloning and nucleotide sequence of cDNA for human liver arginase.</title>
        <authorList>
            <person name="Haraguchi Y."/>
            <person name="Takiguchi M."/>
            <person name="Amaya Y."/>
            <person name="Kawamoto S."/>
            <person name="Matsuda I."/>
            <person name="Mori M."/>
        </authorList>
    </citation>
    <scope>NUCLEOTIDE SEQUENCE [MRNA] (ISOFORM 1)</scope>
    <source>
        <tissue>Liver</tissue>
    </source>
</reference>
<reference key="2">
    <citation type="journal article" date="1988" name="Nucleic Acids Res.">
        <title>Human liver-type arginase gene: structure of the gene and analysis of the promoter region.</title>
        <authorList>
            <person name="Takiguchi M."/>
            <person name="Haraguchi Y."/>
            <person name="Mori M."/>
        </authorList>
    </citation>
    <scope>NUCLEOTIDE SEQUENCE [GENOMIC DNA]</scope>
    <source>
        <tissue>Blood</tissue>
    </source>
</reference>
<reference key="3">
    <citation type="submission" date="2002-01" db="EMBL/GenBank/DDBJ databases">
        <authorList>
            <person name="Lee Y.T."/>
            <person name="Miller J.L."/>
        </authorList>
    </citation>
    <scope>NUCLEOTIDE SEQUENCE [MRNA] (ISOFORM 2)</scope>
    <source>
        <tissue>Erythroblast</tissue>
    </source>
</reference>
<reference key="4">
    <citation type="submission" date="2003-05" db="EMBL/GenBank/DDBJ databases">
        <title>Cloning of human full-length CDSs in BD Creator(TM) system donor vector.</title>
        <authorList>
            <person name="Kalnine N."/>
            <person name="Chen X."/>
            <person name="Rolfs A."/>
            <person name="Halleck A."/>
            <person name="Hines L."/>
            <person name="Eisenstein S."/>
            <person name="Koundinya M."/>
            <person name="Raphael J."/>
            <person name="Moreira D."/>
            <person name="Kelley T."/>
            <person name="LaBaer J."/>
            <person name="Lin Y."/>
            <person name="Phelan M."/>
            <person name="Farmer A."/>
        </authorList>
    </citation>
    <scope>NUCLEOTIDE SEQUENCE [LARGE SCALE MRNA] (ISOFORM 3)</scope>
</reference>
<reference key="5">
    <citation type="journal article" date="2003" name="Nature">
        <title>The DNA sequence and analysis of human chromosome 6.</title>
        <authorList>
            <person name="Mungall A.J."/>
            <person name="Palmer S.A."/>
            <person name="Sims S.K."/>
            <person name="Edwards C.A."/>
            <person name="Ashurst J.L."/>
            <person name="Wilming L."/>
            <person name="Jones M.C."/>
            <person name="Horton R."/>
            <person name="Hunt S.E."/>
            <person name="Scott C.E."/>
            <person name="Gilbert J.G.R."/>
            <person name="Clamp M.E."/>
            <person name="Bethel G."/>
            <person name="Milne S."/>
            <person name="Ainscough R."/>
            <person name="Almeida J.P."/>
            <person name="Ambrose K.D."/>
            <person name="Andrews T.D."/>
            <person name="Ashwell R.I.S."/>
            <person name="Babbage A.K."/>
            <person name="Bagguley C.L."/>
            <person name="Bailey J."/>
            <person name="Banerjee R."/>
            <person name="Barker D.J."/>
            <person name="Barlow K.F."/>
            <person name="Bates K."/>
            <person name="Beare D.M."/>
            <person name="Beasley H."/>
            <person name="Beasley O."/>
            <person name="Bird C.P."/>
            <person name="Blakey S.E."/>
            <person name="Bray-Allen S."/>
            <person name="Brook J."/>
            <person name="Brown A.J."/>
            <person name="Brown J.Y."/>
            <person name="Burford D.C."/>
            <person name="Burrill W."/>
            <person name="Burton J."/>
            <person name="Carder C."/>
            <person name="Carter N.P."/>
            <person name="Chapman J.C."/>
            <person name="Clark S.Y."/>
            <person name="Clark G."/>
            <person name="Clee C.M."/>
            <person name="Clegg S."/>
            <person name="Cobley V."/>
            <person name="Collier R.E."/>
            <person name="Collins J.E."/>
            <person name="Colman L.K."/>
            <person name="Corby N.R."/>
            <person name="Coville G.J."/>
            <person name="Culley K.M."/>
            <person name="Dhami P."/>
            <person name="Davies J."/>
            <person name="Dunn M."/>
            <person name="Earthrowl M.E."/>
            <person name="Ellington A.E."/>
            <person name="Evans K.A."/>
            <person name="Faulkner L."/>
            <person name="Francis M.D."/>
            <person name="Frankish A."/>
            <person name="Frankland J."/>
            <person name="French L."/>
            <person name="Garner P."/>
            <person name="Garnett J."/>
            <person name="Ghori M.J."/>
            <person name="Gilby L.M."/>
            <person name="Gillson C.J."/>
            <person name="Glithero R.J."/>
            <person name="Grafham D.V."/>
            <person name="Grant M."/>
            <person name="Gribble S."/>
            <person name="Griffiths C."/>
            <person name="Griffiths M.N.D."/>
            <person name="Hall R."/>
            <person name="Halls K.S."/>
            <person name="Hammond S."/>
            <person name="Harley J.L."/>
            <person name="Hart E.A."/>
            <person name="Heath P.D."/>
            <person name="Heathcott R."/>
            <person name="Holmes S.J."/>
            <person name="Howden P.J."/>
            <person name="Howe K.L."/>
            <person name="Howell G.R."/>
            <person name="Huckle E."/>
            <person name="Humphray S.J."/>
            <person name="Humphries M.D."/>
            <person name="Hunt A.R."/>
            <person name="Johnson C.M."/>
            <person name="Joy A.A."/>
            <person name="Kay M."/>
            <person name="Keenan S.J."/>
            <person name="Kimberley A.M."/>
            <person name="King A."/>
            <person name="Laird G.K."/>
            <person name="Langford C."/>
            <person name="Lawlor S."/>
            <person name="Leongamornlert D.A."/>
            <person name="Leversha M."/>
            <person name="Lloyd C.R."/>
            <person name="Lloyd D.M."/>
            <person name="Loveland J.E."/>
            <person name="Lovell J."/>
            <person name="Martin S."/>
            <person name="Mashreghi-Mohammadi M."/>
            <person name="Maslen G.L."/>
            <person name="Matthews L."/>
            <person name="McCann O.T."/>
            <person name="McLaren S.J."/>
            <person name="McLay K."/>
            <person name="McMurray A."/>
            <person name="Moore M.J.F."/>
            <person name="Mullikin J.C."/>
            <person name="Niblett D."/>
            <person name="Nickerson T."/>
            <person name="Novik K.L."/>
            <person name="Oliver K."/>
            <person name="Overton-Larty E.K."/>
            <person name="Parker A."/>
            <person name="Patel R."/>
            <person name="Pearce A.V."/>
            <person name="Peck A.I."/>
            <person name="Phillimore B.J.C.T."/>
            <person name="Phillips S."/>
            <person name="Plumb R.W."/>
            <person name="Porter K.M."/>
            <person name="Ramsey Y."/>
            <person name="Ranby S.A."/>
            <person name="Rice C.M."/>
            <person name="Ross M.T."/>
            <person name="Searle S.M."/>
            <person name="Sehra H.K."/>
            <person name="Sheridan E."/>
            <person name="Skuce C.D."/>
            <person name="Smith S."/>
            <person name="Smith M."/>
            <person name="Spraggon L."/>
            <person name="Squares S.L."/>
            <person name="Steward C.A."/>
            <person name="Sycamore N."/>
            <person name="Tamlyn-Hall G."/>
            <person name="Tester J."/>
            <person name="Theaker A.J."/>
            <person name="Thomas D.W."/>
            <person name="Thorpe A."/>
            <person name="Tracey A."/>
            <person name="Tromans A."/>
            <person name="Tubby B."/>
            <person name="Wall M."/>
            <person name="Wallis J.M."/>
            <person name="West A.P."/>
            <person name="White S.S."/>
            <person name="Whitehead S.L."/>
            <person name="Whittaker H."/>
            <person name="Wild A."/>
            <person name="Willey D.J."/>
            <person name="Wilmer T.E."/>
            <person name="Wood J.M."/>
            <person name="Wray P.W."/>
            <person name="Wyatt J.C."/>
            <person name="Young L."/>
            <person name="Younger R.M."/>
            <person name="Bentley D.R."/>
            <person name="Coulson A."/>
            <person name="Durbin R.M."/>
            <person name="Hubbard T."/>
            <person name="Sulston J.E."/>
            <person name="Dunham I."/>
            <person name="Rogers J."/>
            <person name="Beck S."/>
        </authorList>
    </citation>
    <scope>NUCLEOTIDE SEQUENCE [LARGE SCALE GENOMIC DNA]</scope>
</reference>
<reference key="6">
    <citation type="journal article" date="2004" name="Genome Res.">
        <title>The status, quality, and expansion of the NIH full-length cDNA project: the Mammalian Gene Collection (MGC).</title>
        <authorList>
            <consortium name="The MGC Project Team"/>
        </authorList>
    </citation>
    <scope>NUCLEOTIDE SEQUENCE [LARGE SCALE MRNA] (ISOFORMS 1 AND 3)</scope>
    <source>
        <tissue>Liver</tissue>
        <tissue>Skeletal muscle</tissue>
    </source>
</reference>
<reference key="7">
    <citation type="journal article" date="1990" name="Biochem. J.">
        <title>Expression of human liver arginase in Escherichia coli. Purification and properties of the product.</title>
        <authorList>
            <person name="Ikemoto M."/>
            <person name="Tabata M."/>
            <person name="Miyake T."/>
            <person name="Kono T."/>
            <person name="Mori M."/>
            <person name="Totani M."/>
            <person name="Murachi T."/>
        </authorList>
    </citation>
    <scope>NUCLEOTIDE SEQUENCE [MRNA] OF 1-13</scope>
    <scope>SUBUNIT</scope>
    <source>
        <tissue>Liver</tissue>
    </source>
</reference>
<reference key="8">
    <citation type="journal article" date="2005" name="Blood">
        <title>Arginase I is constitutively expressed in human granulocytes and participates in fungicidal activity.</title>
        <authorList>
            <person name="Munder M."/>
            <person name="Mollinedo F."/>
            <person name="Calafat J."/>
            <person name="Canchado J."/>
            <person name="Gil-Lamaignere C."/>
            <person name="Fuentes J.M."/>
            <person name="Luckner C."/>
            <person name="Doschko G."/>
            <person name="Soler G."/>
            <person name="Eichmann K."/>
            <person name="Mueller F.M."/>
            <person name="Ho A.D."/>
            <person name="Goerner M."/>
            <person name="Modolell M."/>
        </authorList>
    </citation>
    <scope>TISSUE SPECIFICITY</scope>
    <scope>SUBCELLULAR LOCATION</scope>
    <scope>FUNCTION IN ANTIMICROBIAL RESPONSE</scope>
</reference>
<reference key="9">
    <citation type="journal article" date="2006" name="Blood">
        <title>Suppression of T-cell functions by human granulocyte arginase.</title>
        <authorList>
            <person name="Munder M."/>
            <person name="Schneider H."/>
            <person name="Luckner C."/>
            <person name="Giese T."/>
            <person name="Langhans C.D."/>
            <person name="Fuentes J.M."/>
            <person name="Kropf P."/>
            <person name="Mueller I."/>
            <person name="Kolb A."/>
            <person name="Modolell M."/>
            <person name="Ho A.D."/>
        </authorList>
    </citation>
    <scope>FUNCTION IN ANTIMICROBIAL RESPONSE</scope>
</reference>
<reference key="10">
    <citation type="journal article" date="2009" name="J. Immunol.">
        <title>Regulation of NK cell function by human granulocyte arginase.</title>
        <authorList>
            <person name="Oberlies J."/>
            <person name="Watzl C."/>
            <person name="Giese T."/>
            <person name="Luckner C."/>
            <person name="Kropf P."/>
            <person name="Mueller I."/>
            <person name="Ho A.D."/>
            <person name="Munder M."/>
        </authorList>
    </citation>
    <scope>FUNCTION</scope>
</reference>
<reference key="11">
    <citation type="journal article" date="2011" name="BMC Syst. Biol.">
        <title>Initial characterization of the human central proteome.</title>
        <authorList>
            <person name="Burkard T.R."/>
            <person name="Planyavsky M."/>
            <person name="Kaupe I."/>
            <person name="Breitwieser F.P."/>
            <person name="Buerckstuemmer T."/>
            <person name="Bennett K.L."/>
            <person name="Superti-Furga G."/>
            <person name="Colinge J."/>
        </authorList>
    </citation>
    <scope>IDENTIFICATION BY MASS SPECTROMETRY [LARGE SCALE ANALYSIS]</scope>
</reference>
<reference key="12">
    <citation type="journal article" date="2013" name="J. Immunol.">
        <title>Microenvironments in tuberculous granulomas are delineated by distinct populations of macrophage subsets and expression of nitric oxide synthase and arginase isoforms.</title>
        <authorList>
            <person name="Mattila J.T."/>
            <person name="Ojo O.O."/>
            <person name="Kepka-Lenhart D."/>
            <person name="Marino S."/>
            <person name="Kim J.H."/>
            <person name="Eum S.Y."/>
            <person name="Via L.E."/>
            <person name="Barry C.E. III"/>
            <person name="Klein E."/>
            <person name="Kirschner D.E."/>
            <person name="Morris S.M. Jr."/>
            <person name="Lin P.L."/>
            <person name="Flynn J.L."/>
        </authorList>
    </citation>
    <scope>TISSUE SPECIFICITY</scope>
</reference>
<reference key="13">
    <citation type="journal article" date="2014" name="J. Proteomics">
        <title>An enzyme assisted RP-RPLC approach for in-depth analysis of human liver phosphoproteome.</title>
        <authorList>
            <person name="Bian Y."/>
            <person name="Song C."/>
            <person name="Cheng K."/>
            <person name="Dong M."/>
            <person name="Wang F."/>
            <person name="Huang J."/>
            <person name="Sun D."/>
            <person name="Wang L."/>
            <person name="Ye M."/>
            <person name="Zou H."/>
        </authorList>
    </citation>
    <scope>PHOSPHORYLATION [LARGE SCALE ANALYSIS] AT SER-62; SER-163 AND SER-217</scope>
    <scope>IDENTIFICATION BY MASS SPECTROMETRY [LARGE SCALE ANALYSIS]</scope>
    <source>
        <tissue>Liver</tissue>
    </source>
</reference>
<reference key="14">
    <citation type="journal article" date="2016" name="Nat. Immunol.">
        <title>Arginase 1 is an innate lymphoid-cell-intrinsic metabolic checkpoint controlling type 2 inflammation.</title>
        <authorList>
            <person name="Monticelli L.A."/>
            <person name="Buck M.D."/>
            <person name="Flamar A.L."/>
            <person name="Saenz S.A."/>
            <person name="Tait Wojno E.D."/>
            <person name="Yudanin N.A."/>
            <person name="Osborne L.C."/>
            <person name="Hepworth M.R."/>
            <person name="Tran S.V."/>
            <person name="Rodewald H.R."/>
            <person name="Shah H."/>
            <person name="Cross J.R."/>
            <person name="Diamond J.M."/>
            <person name="Cantu E."/>
            <person name="Christie J.D."/>
            <person name="Pearce E.L."/>
            <person name="Artis D."/>
        </authorList>
    </citation>
    <scope>TISSUE SPECIFICITY</scope>
</reference>
<reference key="15">
    <citation type="journal article" date="2017" name="Nature">
        <title>CMTM6 maintains the expression of PD-L1 and regulates anti-tumour immunity.</title>
        <authorList>
            <person name="Burr M.L."/>
            <person name="Sparbier C.E."/>
            <person name="Chan Y.C."/>
            <person name="Williamson J.C."/>
            <person name="Woods K."/>
            <person name="Beavis P.A."/>
            <person name="Lam E.Y.N."/>
            <person name="Henderson M.A."/>
            <person name="Bell C.C."/>
            <person name="Stolzenburg S."/>
            <person name="Gilan O."/>
            <person name="Bloor S."/>
            <person name="Noori T."/>
            <person name="Morgens D.W."/>
            <person name="Bassik M.C."/>
            <person name="Neeson P.J."/>
            <person name="Behren A."/>
            <person name="Darcy P.K."/>
            <person name="Dawson S.J."/>
            <person name="Voskoboinik I."/>
            <person name="Trapani J.A."/>
            <person name="Cebon J."/>
            <person name="Lehner P.J."/>
            <person name="Dawson M.A."/>
        </authorList>
    </citation>
    <scope>INTERACTION WITH CMTM6</scope>
    <scope>IDENTIFICATION BY MASS SPECTROMETRY</scope>
</reference>
<reference key="16">
    <citation type="journal article" date="2005" name="Proc. Natl. Acad. Sci. U.S.A.">
        <title>Crystal structure of human arginase I at 1.29-A resolution and exploration of inhibition in the immune response.</title>
        <authorList>
            <person name="Di Costanzo L."/>
            <person name="Sabio G."/>
            <person name="Mora A."/>
            <person name="Rodriguez P.C."/>
            <person name="Ochoa A.C."/>
            <person name="Centeno F."/>
            <person name="Christianson D.W."/>
        </authorList>
    </citation>
    <scope>X-RAY CRYSTALLOGRAPHY (1.29 ANGSTROMS) IN COMPLEX WITH MANGANESE IONS AND THE SYNTHETIC INHIBITOR 2(S)-AMINO-6-BORONOHEXANOIC ACID</scope>
    <scope>SUBCELLULAR LOCATION</scope>
    <scope>SUBUNIT</scope>
    <scope>CATALYTIC ACTIVITY</scope>
</reference>
<reference key="17">
    <citation type="journal article" date="2007" name="Arch. Biochem. Biophys.">
        <title>Expression, purification, assay, and crystal structure of perdeuterated human arginase I.</title>
        <authorList>
            <person name="Di Costanzo L."/>
            <person name="Moulin M."/>
            <person name="Haertlein M."/>
            <person name="Meilleur F."/>
            <person name="Christianson D.W."/>
        </authorList>
    </citation>
    <scope>X-RAY CRYSTALLOGRAPHY (1.9 ANGSTROMS) IN COMPLEX WITH MANGANESE IONS AND THE SYNTHETIC INHIBITOR 2(S)-AMINO-6-BORONOHEXANOIC ACID</scope>
    <scope>IDENTIFICATION BY MASS SPECTROMETRY</scope>
    <scope>CATALYTIC ACTIVITY</scope>
</reference>
<reference key="18">
    <citation type="journal article" date="2007" name="J. Am. Chem. Soc.">
        <title>Crystal structure of human arginase I complexed with thiosemicarbazide reveals an unusual thiocarbonyl mu-sulfide ligand in the binuclear manganese cluster.</title>
        <authorList>
            <person name="Di Costanzo L."/>
            <person name="Pique M.E."/>
            <person name="Christianson D.W."/>
        </authorList>
    </citation>
    <scope>X-RAY CRYSTALLOGRAPHY (1.70 ANGSTROMS) IN COMPLEX WITH MANGANESE IONS AND THIOSEMICARBAZIDE</scope>
    <scope>SUBUNIT</scope>
</reference>
<reference key="19">
    <citation type="journal article" date="2008" name="Org. Biomol. Chem.">
        <title>Synthesis of (2S)-2-amino-7,8-epoxyoctanoic acid and structure of its metal-bridging complex with human arginase I.</title>
        <authorList>
            <person name="Zakharian T.Y."/>
            <person name="Di Costanzo L."/>
            <person name="Christianson D.W."/>
        </authorList>
    </citation>
    <scope>X-RAY CRYSTALLOGRAPHY (1.51 ANGSTROMS) IN COMPLEX WITH MANGANESE IONS AND THE SYNTHETIC INHIBITOR (2S)-2-AMINO-7,8-EPOXYOCTANOIC ACID</scope>
</reference>
<reference evidence="37 38 45 46" key="20">
    <citation type="journal article" date="2011" name="J. Med. Chem.">
        <title>Binding of alpha,alpha-disubstituted amino acids to arginase suggests new avenues for inhibitor design.</title>
        <authorList>
            <person name="Ilies M."/>
            <person name="Di Costanzo L."/>
            <person name="Dowling D.P."/>
            <person name="Thorn K.J."/>
            <person name="Christianson D.W."/>
        </authorList>
    </citation>
    <scope>X-RAY CRYSTALLOGRAPHY (1.43 ANGSTROMS) IN COMPLEX WITH MAGNESIUM AND INHIBITORS</scope>
    <scope>CATALYTIC ACTIVITY</scope>
    <scope>COFACTOR</scope>
</reference>
<reference key="21">
    <citation type="journal article" date="1992" name="Am. J. Hum. Genet.">
        <title>Three novel mutations in the liver-type arginase gene in three unrelated Japanese patients with argininemia.</title>
        <authorList>
            <person name="Uchino T."/>
            <person name="Haraguchi Y."/>
            <person name="Aparicio J.M."/>
            <person name="Mizutani N."/>
            <person name="Higashikawa M."/>
            <person name="Naitoh H."/>
            <person name="Mori M."/>
            <person name="Matsuda I."/>
        </authorList>
    </citation>
    <scope>VARIANT ARGIN ARG-235</scope>
</reference>
<reference key="22">
    <citation type="journal article" date="1992" name="Am. J. Hum. Genet.">
        <title>Molecular genetic study of human arginase deficiency.</title>
        <authorList>
            <person name="Grody W.W."/>
            <person name="Klein D."/>
            <person name="Dodson A.E."/>
            <person name="Kern R.M."/>
            <person name="Wissmann P.B."/>
            <person name="Goodman B.K."/>
            <person name="Bassand P."/>
            <person name="Marescau B."/>
            <person name="Kang S.-S."/>
            <person name="Leonard J.V."/>
            <person name="Cederbaum S.D."/>
        </authorList>
    </citation>
    <scope>VARIANT SER-290</scope>
</reference>
<reference key="23">
    <citation type="journal article" date="1995" name="Hum. Genet.">
        <title>Molecular basis of phenotypic variation in patients with argininemia.</title>
        <authorList>
            <person name="Uchino T."/>
            <person name="Snyderman S.E."/>
            <person name="Lambert M."/>
            <person name="Qureshi I.A."/>
            <person name="Shapira S.K."/>
            <person name="Sansaricq C."/>
            <person name="Smit L.M.E."/>
            <person name="Jakobs C."/>
            <person name="Matsuda I."/>
        </authorList>
    </citation>
    <scope>VARIANTS ARGIN THR-11 AND VAL-138</scope>
</reference>
<reference key="24">
    <citation type="journal article" date="2012" name="Gene">
        <title>Analysis of novel ARG1 mutations causing hyperargininemia and correlation with arginase I activity in erythrocytes.</title>
        <authorList>
            <person name="Carvalho D.R."/>
            <person name="Brand G.D."/>
            <person name="Brum J.M."/>
            <person name="Takata R.I."/>
            <person name="Speck-Martins C.E."/>
            <person name="Pratesi R."/>
        </authorList>
    </citation>
    <scope>VARIANTS ARGIN THR-11; ASP-27; VAL-74; ILE-134 AND GLN-308</scope>
</reference>
<reference key="25">
    <citation type="journal article" date="2013" name="Pediatr. Neurol.">
        <title>Five novel mutations in ARG1 gene in Chinese patients of argininemia.</title>
        <authorList>
            <person name="Wu T.F."/>
            <person name="Liu Y.P."/>
            <person name="Li X.Y."/>
            <person name="Wang Q."/>
            <person name="Ding Y."/>
            <person name="Ma Y.Y."/>
            <person name="Song J.Q."/>
            <person name="Yang Y.L."/>
        </authorList>
    </citation>
    <scope>VARIANTS ARGIN VAL-125; THR-180 AND ARG-235</scope>
</reference>
<gene>
    <name type="primary">ARG1</name>
</gene>
<evidence type="ECO:0000250" key="1">
    <source>
        <dbReference type="UniProtKB" id="P53608"/>
    </source>
</evidence>
<evidence type="ECO:0000250" key="2">
    <source>
        <dbReference type="UniProtKB" id="P78540"/>
    </source>
</evidence>
<evidence type="ECO:0000250" key="3">
    <source>
        <dbReference type="UniProtKB" id="Q61176"/>
    </source>
</evidence>
<evidence type="ECO:0000255" key="4">
    <source>
        <dbReference type="PROSITE-ProRule" id="PRU00742"/>
    </source>
</evidence>
<evidence type="ECO:0000269" key="5">
    <source>
    </source>
</evidence>
<evidence type="ECO:0000269" key="6">
    <source>
    </source>
</evidence>
<evidence type="ECO:0000269" key="7">
    <source>
    </source>
</evidence>
<evidence type="ECO:0000269" key="8">
    <source>
    </source>
</evidence>
<evidence type="ECO:0000269" key="9">
    <source>
    </source>
</evidence>
<evidence type="ECO:0000269" key="10">
    <source>
    </source>
</evidence>
<evidence type="ECO:0000269" key="11">
    <source>
    </source>
</evidence>
<evidence type="ECO:0000269" key="12">
    <source>
    </source>
</evidence>
<evidence type="ECO:0000269" key="13">
    <source>
    </source>
</evidence>
<evidence type="ECO:0000269" key="14">
    <source>
    </source>
</evidence>
<evidence type="ECO:0000269" key="15">
    <source>
    </source>
</evidence>
<evidence type="ECO:0000269" key="16">
    <source>
    </source>
</evidence>
<evidence type="ECO:0000269" key="17">
    <source>
    </source>
</evidence>
<evidence type="ECO:0000269" key="18">
    <source>
    </source>
</evidence>
<evidence type="ECO:0000269" key="19">
    <source>
    </source>
</evidence>
<evidence type="ECO:0000269" key="20">
    <source>
    </source>
</evidence>
<evidence type="ECO:0000303" key="21">
    <source>
    </source>
</evidence>
<evidence type="ECO:0000303" key="22">
    <source ref="3"/>
</evidence>
<evidence type="ECO:0000303" key="23">
    <source ref="4"/>
</evidence>
<evidence type="ECO:0000305" key="24"/>
<evidence type="ECO:0000305" key="25">
    <source>
    </source>
</evidence>
<evidence type="ECO:0007744" key="26">
    <source>
        <dbReference type="PDB" id="1WVA"/>
    </source>
</evidence>
<evidence type="ECO:0007744" key="27">
    <source>
        <dbReference type="PDB" id="1WVB"/>
    </source>
</evidence>
<evidence type="ECO:0007744" key="28">
    <source>
        <dbReference type="PDB" id="2AEB"/>
    </source>
</evidence>
<evidence type="ECO:0007744" key="29">
    <source>
        <dbReference type="PDB" id="2PHA"/>
    </source>
</evidence>
<evidence type="ECO:0007744" key="30">
    <source>
        <dbReference type="PDB" id="2PHO"/>
    </source>
</evidence>
<evidence type="ECO:0007744" key="31">
    <source>
        <dbReference type="PDB" id="2PLL"/>
    </source>
</evidence>
<evidence type="ECO:0007744" key="32">
    <source>
        <dbReference type="PDB" id="2ZAV"/>
    </source>
</evidence>
<evidence type="ECO:0007744" key="33">
    <source>
        <dbReference type="PDB" id="3DJ8"/>
    </source>
</evidence>
<evidence type="ECO:0007744" key="34">
    <source>
        <dbReference type="PDB" id="3E6K"/>
    </source>
</evidence>
<evidence type="ECO:0007744" key="35">
    <source>
        <dbReference type="PDB" id="3E6V"/>
    </source>
</evidence>
<evidence type="ECO:0007744" key="36">
    <source>
        <dbReference type="PDB" id="3F80"/>
    </source>
</evidence>
<evidence type="ECO:0007744" key="37">
    <source>
        <dbReference type="PDB" id="3GMZ"/>
    </source>
</evidence>
<evidence type="ECO:0007744" key="38">
    <source>
        <dbReference type="PDB" id="3GN0"/>
    </source>
</evidence>
<evidence type="ECO:0007744" key="39">
    <source>
        <dbReference type="PDB" id="3KV2"/>
    </source>
</evidence>
<evidence type="ECO:0007744" key="40">
    <source>
        <dbReference type="PDB" id="3LP4"/>
    </source>
</evidence>
<evidence type="ECO:0007744" key="41">
    <source>
        <dbReference type="PDB" id="3LP7"/>
    </source>
</evidence>
<evidence type="ECO:0007744" key="42">
    <source>
        <dbReference type="PDB" id="3MFV"/>
    </source>
</evidence>
<evidence type="ECO:0007744" key="43">
    <source>
        <dbReference type="PDB" id="3MFW"/>
    </source>
</evidence>
<evidence type="ECO:0007744" key="44">
    <source>
        <dbReference type="PDB" id="3MJL"/>
    </source>
</evidence>
<evidence type="ECO:0007744" key="45">
    <source>
        <dbReference type="PDB" id="3SJT"/>
    </source>
</evidence>
<evidence type="ECO:0007744" key="46">
    <source>
        <dbReference type="PDB" id="3SKK"/>
    </source>
</evidence>
<evidence type="ECO:0007744" key="47">
    <source>
        <dbReference type="PDB" id="3THJ"/>
    </source>
</evidence>
<evidence type="ECO:0007744" key="48">
    <source>
        <dbReference type="PDB" id="4FCI"/>
    </source>
</evidence>
<evidence type="ECO:0007744" key="49">
    <source>
        <dbReference type="PDB" id="4GSZ"/>
    </source>
</evidence>
<evidence type="ECO:0007744" key="50">
    <source>
        <dbReference type="PDB" id="4GWC"/>
    </source>
</evidence>
<evidence type="ECO:0007744" key="51">
    <source>
        <dbReference type="PDB" id="4GWD"/>
    </source>
</evidence>
<evidence type="ECO:0007744" key="52">
    <source>
        <dbReference type="PDB" id="4HWW"/>
    </source>
</evidence>
<evidence type="ECO:0007744" key="53">
    <source>
        <dbReference type="PDB" id="4HXQ"/>
    </source>
</evidence>
<evidence type="ECO:0007744" key="54">
    <source>
        <dbReference type="PDB" id="4IE1"/>
    </source>
</evidence>
<evidence type="ECO:0007744" key="55">
    <source>
    </source>
</evidence>
<evidence type="ECO:0007829" key="56">
    <source>
        <dbReference type="PDB" id="2AEB"/>
    </source>
</evidence>
<evidence type="ECO:0007829" key="57">
    <source>
        <dbReference type="PDB" id="3TH7"/>
    </source>
</evidence>
<evidence type="ECO:0007829" key="58">
    <source>
        <dbReference type="PDB" id="6Q92"/>
    </source>
</evidence>
<evidence type="ECO:0007829" key="59">
    <source>
        <dbReference type="PDB" id="7KLK"/>
    </source>
</evidence>
<evidence type="ECO:0007829" key="60">
    <source>
        <dbReference type="PDB" id="7LEY"/>
    </source>
</evidence>
<accession>P05089</accession>
<accession>A6NEA0</accession>
<accession>Q5JWT5</accession>
<accession>Q5JWT6</accession>
<accession>Q8TE72</accession>
<accession>Q9BS50</accession>
<sequence length="322" mass="34735">MSAKSRTIGIIGAPFSKGQPRGGVEEGPTVLRKAGLLEKLKEQECDVKDYGDLPFADIPNDSPFQIVKNPRSVGKASEQLAGKVAEVKKNGRISLVLGGDHSLAIGSISGHARVHPDLGVIWVDAHTDINTPLTTTSGNLHGQPVSFLLKELKGKIPDVPGFSWVTPCISAKDIVYIGLRDVDPGEHYILKTLGIKYFSMTEVDRLGIGKVMEETLSYLLGRKKRPIHLSFDVDGLDPSFTPATGTPVVGGLTYREGLYITEEIYKTGLLSGLDIMEVNPSLGKTPEEVTRTVNTAVAITLACFGLAREGNHKPIDYLNPPK</sequence>
<feature type="chain" id="PRO_0000173693" description="Arginase-1">
    <location>
        <begin position="1"/>
        <end position="322"/>
    </location>
</feature>
<feature type="binding site" evidence="8 10 11 12 14 26 27 28 29 30 31 32 33 34 35 36 37 38 39 40 41 42 43 44 45 46 48 49 50 51 52 53 54">
    <location>
        <position position="101"/>
    </location>
    <ligand>
        <name>Mn(2+)</name>
        <dbReference type="ChEBI" id="CHEBI:29035"/>
        <label>1</label>
    </ligand>
</feature>
<feature type="binding site" evidence="8 10 11 12 14 26 27 28 29 30 31 32 33 34 35 36 37 38 39 40 41 42 43 44 45 46 48 49 50 51 52 53 54">
    <location>
        <position position="124"/>
    </location>
    <ligand>
        <name>Mn(2+)</name>
        <dbReference type="ChEBI" id="CHEBI:29035"/>
        <label>1</label>
    </ligand>
</feature>
<feature type="binding site" evidence="8 10 11 12 14 26 27 28 29 30 31 32 33 34 35 36 37 38 39 40 41 42 43 44 45 46 48 49 50 51 52 53 54">
    <location>
        <position position="124"/>
    </location>
    <ligand>
        <name>Mn(2+)</name>
        <dbReference type="ChEBI" id="CHEBI:29035"/>
        <label>2</label>
    </ligand>
</feature>
<feature type="binding site" evidence="37 38 39 41 47">
    <location>
        <begin position="126"/>
        <end position="130"/>
    </location>
    <ligand>
        <name>substrate</name>
    </ligand>
</feature>
<feature type="binding site" evidence="8 10 11 12 14 26 27 28 29 30 31 32 33 34 35 36 37 38 39 40 41 42 43 44 45 46 48 49 50 51 52 53 54">
    <location>
        <position position="126"/>
    </location>
    <ligand>
        <name>Mn(2+)</name>
        <dbReference type="ChEBI" id="CHEBI:29035"/>
        <label>2</label>
    </ligand>
</feature>
<feature type="binding site" evidence="8 10 11 12 14 26 27 28 29 30 31 32 33 34 35 36 37 38 39 40 41 42 43 44 45 46 48 49 50 51 52 53 54">
    <location>
        <position position="128"/>
    </location>
    <ligand>
        <name>Mn(2+)</name>
        <dbReference type="ChEBI" id="CHEBI:29035"/>
        <label>1</label>
    </ligand>
</feature>
<feature type="binding site" evidence="37 38 39 41 47">
    <location>
        <begin position="137"/>
        <end position="139"/>
    </location>
    <ligand>
        <name>substrate</name>
    </ligand>
</feature>
<feature type="binding site" evidence="37 38 39 41 47">
    <location>
        <position position="183"/>
    </location>
    <ligand>
        <name>substrate</name>
    </ligand>
</feature>
<feature type="binding site" evidence="8 10 11 12 14 26 27 28 29 30 31 32 33 34 35 36 37 38 39 40 41 42 43 44 45 46 48 49 50 51 52 53 54">
    <location>
        <position position="232"/>
    </location>
    <ligand>
        <name>Mn(2+)</name>
        <dbReference type="ChEBI" id="CHEBI:29035"/>
        <label>1</label>
    </ligand>
</feature>
<feature type="binding site" evidence="8 10 11 12 14 26 27 28 29 30 31 32 33 34 35 36 37 38 39 40 41 42 43 44 45 46 48 49 50 51 52 53 54">
    <location>
        <position position="232"/>
    </location>
    <ligand>
        <name>Mn(2+)</name>
        <dbReference type="ChEBI" id="CHEBI:29035"/>
        <label>2</label>
    </ligand>
</feature>
<feature type="binding site" evidence="8 10 11 12 14 26 27 28 29 30 31 32 33 34 35 36 37 38 39 40 41 42 43 44 45 46 48 49 50 51 52 53 54">
    <location>
        <position position="234"/>
    </location>
    <ligand>
        <name>Mn(2+)</name>
        <dbReference type="ChEBI" id="CHEBI:29035"/>
        <label>2</label>
    </ligand>
</feature>
<feature type="binding site" evidence="1">
    <location>
        <position position="246"/>
    </location>
    <ligand>
        <name>substrate</name>
    </ligand>
</feature>
<feature type="binding site" evidence="2">
    <location>
        <position position="277"/>
    </location>
    <ligand>
        <name>substrate</name>
    </ligand>
</feature>
<feature type="modified residue" description="N6-succinyllysine" evidence="3">
    <location>
        <position position="17"/>
    </location>
</feature>
<feature type="modified residue" description="Phosphoserine" evidence="55">
    <location>
        <position position="62"/>
    </location>
</feature>
<feature type="modified residue" description="Phosphoserine" evidence="3">
    <location>
        <position position="72"/>
    </location>
</feature>
<feature type="modified residue" description="N6-succinyllysine" evidence="3">
    <location>
        <position position="75"/>
    </location>
</feature>
<feature type="modified residue" description="Phosphoserine" evidence="55">
    <location>
        <position position="163"/>
    </location>
</feature>
<feature type="modified residue" description="Phosphoserine" evidence="55">
    <location>
        <position position="217"/>
    </location>
</feature>
<feature type="splice variant" id="VSP_009330" description="In isoform 2." evidence="22">
    <original>Q</original>
    <variation>QVTQNFLIL</variation>
    <location>
        <position position="43"/>
    </location>
</feature>
<feature type="splice variant" id="VSP_009331" description="In isoform 3." evidence="21 23">
    <location>
        <begin position="204"/>
        <end position="289"/>
    </location>
</feature>
<feature type="sequence variant" id="VAR_015594" description="In ARGIN; 12% of wild-type activity; dbSNP:rs28941474." evidence="16 20">
    <original>I</original>
    <variation>T</variation>
    <location>
        <position position="11"/>
    </location>
</feature>
<feature type="sequence variant" id="VAR_072164" description="In ARGIN; 5.2% of wild-type activity; dbSNP:rs1326930389." evidence="16">
    <original>G</original>
    <variation>D</variation>
    <location>
        <position position="27"/>
    </location>
</feature>
<feature type="sequence variant" id="VAR_072165" description="In ARGIN; 9.3% of wild-type activity." evidence="16">
    <original>G</original>
    <variation>V</variation>
    <location>
        <position position="74"/>
    </location>
</feature>
<feature type="sequence variant" id="VAR_072166" description="In ARGIN; decreases erythrocyte arginase activity." evidence="18">
    <original>A</original>
    <variation>V</variation>
    <location>
        <position position="125"/>
    </location>
</feature>
<feature type="sequence variant" id="VAR_072167" description="In ARGIN; 9.3% of wild-type activity." evidence="16">
    <original>T</original>
    <variation>I</variation>
    <location>
        <position position="134"/>
    </location>
</feature>
<feature type="sequence variant" id="VAR_015595" description="In ARGIN; dbSNP:rs104893943." evidence="20">
    <original>G</original>
    <variation>V</variation>
    <location>
        <position position="138"/>
    </location>
</feature>
<feature type="sequence variant" id="VAR_072168" description="In ARGIN; decreases erythrocyte arginase activity." evidence="18">
    <original>R</original>
    <variation>T</variation>
    <location>
        <position position="180"/>
    </location>
</feature>
<feature type="sequence variant" id="VAR_000674" description="In ARGIN; decreases erythrocyte arginase activity; dbSNP:rs104893948." evidence="5 18">
    <original>G</original>
    <variation>R</variation>
    <location>
        <position position="235"/>
    </location>
</feature>
<feature type="sequence variant" id="VAR_000675" description="In dbSNP:rs104893942." evidence="7">
    <original>T</original>
    <variation>S</variation>
    <location>
        <position position="290"/>
    </location>
</feature>
<feature type="sequence variant" id="VAR_072169" description="In ARGIN; 20.8% of wild-type activity; dbSNP:rs377280518." evidence="16">
    <original>R</original>
    <variation>Q</variation>
    <location>
        <position position="308"/>
    </location>
</feature>
<feature type="sequence conflict" description="In Ref. 3; AAL71547." evidence="24" ref="3">
    <original>K</original>
    <variation>E</variation>
    <location>
        <position position="48"/>
    </location>
</feature>
<feature type="sequence conflict" description="In Ref. 1; AAA51776." evidence="24" ref="1">
    <original>E</original>
    <variation>Q</variation>
    <location>
        <position position="86"/>
    </location>
</feature>
<feature type="sequence conflict" description="In Ref. 3; AAL71547." evidence="24" ref="3">
    <original>E</original>
    <variation>K</variation>
    <location>
        <position position="202"/>
    </location>
</feature>
<feature type="helix" evidence="58">
    <location>
        <begin position="4"/>
        <end position="6"/>
    </location>
</feature>
<feature type="strand" evidence="56">
    <location>
        <begin position="7"/>
        <end position="13"/>
    </location>
</feature>
<feature type="strand" evidence="59">
    <location>
        <begin position="19"/>
        <end position="21"/>
    </location>
</feature>
<feature type="helix" evidence="56">
    <location>
        <begin position="22"/>
        <end position="26"/>
    </location>
</feature>
<feature type="helix" evidence="56">
    <location>
        <begin position="27"/>
        <end position="33"/>
    </location>
</feature>
<feature type="helix" evidence="56">
    <location>
        <begin position="36"/>
        <end position="42"/>
    </location>
</feature>
<feature type="strand" evidence="56">
    <location>
        <begin position="46"/>
        <end position="52"/>
    </location>
</feature>
<feature type="strand" evidence="60">
    <location>
        <begin position="64"/>
        <end position="66"/>
    </location>
</feature>
<feature type="strand" evidence="57">
    <location>
        <begin position="67"/>
        <end position="69"/>
    </location>
</feature>
<feature type="helix" evidence="56">
    <location>
        <begin position="70"/>
        <end position="89"/>
    </location>
</feature>
<feature type="strand" evidence="56">
    <location>
        <begin position="93"/>
        <end position="99"/>
    </location>
</feature>
<feature type="helix" evidence="56">
    <location>
        <begin position="101"/>
        <end position="103"/>
    </location>
</feature>
<feature type="helix" evidence="56">
    <location>
        <begin position="104"/>
        <end position="114"/>
    </location>
</feature>
<feature type="strand" evidence="56">
    <location>
        <begin position="119"/>
        <end position="126"/>
    </location>
</feature>
<feature type="turn" evidence="56">
    <location>
        <begin position="132"/>
        <end position="134"/>
    </location>
</feature>
<feature type="helix" evidence="56">
    <location>
        <begin position="140"/>
        <end position="142"/>
    </location>
</feature>
<feature type="helix" evidence="56">
    <location>
        <begin position="144"/>
        <end position="148"/>
    </location>
</feature>
<feature type="helix" evidence="56">
    <location>
        <begin position="150"/>
        <end position="152"/>
    </location>
</feature>
<feature type="turn" evidence="56">
    <location>
        <begin position="153"/>
        <end position="155"/>
    </location>
</feature>
<feature type="helix" evidence="56">
    <location>
        <begin position="171"/>
        <end position="173"/>
    </location>
</feature>
<feature type="strand" evidence="56">
    <location>
        <begin position="174"/>
        <end position="179"/>
    </location>
</feature>
<feature type="helix" evidence="56">
    <location>
        <begin position="184"/>
        <end position="193"/>
    </location>
</feature>
<feature type="strand" evidence="56">
    <location>
        <begin position="196"/>
        <end position="199"/>
    </location>
</feature>
<feature type="helix" evidence="56">
    <location>
        <begin position="200"/>
        <end position="206"/>
    </location>
</feature>
<feature type="helix" evidence="56">
    <location>
        <begin position="208"/>
        <end position="220"/>
    </location>
</feature>
<feature type="strand" evidence="56">
    <location>
        <begin position="221"/>
        <end position="223"/>
    </location>
</feature>
<feature type="strand" evidence="56">
    <location>
        <begin position="227"/>
        <end position="232"/>
    </location>
</feature>
<feature type="helix" evidence="56">
    <location>
        <begin position="233"/>
        <end position="235"/>
    </location>
</feature>
<feature type="turn" evidence="56">
    <location>
        <begin position="238"/>
        <end position="240"/>
    </location>
</feature>
<feature type="strand" evidence="56">
    <location>
        <begin position="243"/>
        <end position="246"/>
    </location>
</feature>
<feature type="helix" evidence="56">
    <location>
        <begin position="254"/>
        <end position="267"/>
    </location>
</feature>
<feature type="strand" evidence="56">
    <location>
        <begin position="270"/>
        <end position="276"/>
    </location>
</feature>
<feature type="helix" evidence="56">
    <location>
        <begin position="280"/>
        <end position="282"/>
    </location>
</feature>
<feature type="helix" evidence="56">
    <location>
        <begin position="286"/>
        <end position="303"/>
    </location>
</feature>
<protein>
    <recommendedName>
        <fullName>Arginase-1</fullName>
        <ecNumber evidence="8 11 14">3.5.3.1</ecNumber>
    </recommendedName>
    <alternativeName>
        <fullName>Liver-type arginase</fullName>
    </alternativeName>
    <alternativeName>
        <fullName>Type I arginase</fullName>
    </alternativeName>
</protein>